<reference key="1">
    <citation type="journal article" date="2008" name="Genome Res.">
        <title>Comparative genome analysis of Salmonella enteritidis PT4 and Salmonella gallinarum 287/91 provides insights into evolutionary and host adaptation pathways.</title>
        <authorList>
            <person name="Thomson N.R."/>
            <person name="Clayton D.J."/>
            <person name="Windhorst D."/>
            <person name="Vernikos G."/>
            <person name="Davidson S."/>
            <person name="Churcher C."/>
            <person name="Quail M.A."/>
            <person name="Stevens M."/>
            <person name="Jones M.A."/>
            <person name="Watson M."/>
            <person name="Barron A."/>
            <person name="Layton A."/>
            <person name="Pickard D."/>
            <person name="Kingsley R.A."/>
            <person name="Bignell A."/>
            <person name="Clark L."/>
            <person name="Harris B."/>
            <person name="Ormond D."/>
            <person name="Abdellah Z."/>
            <person name="Brooks K."/>
            <person name="Cherevach I."/>
            <person name="Chillingworth T."/>
            <person name="Woodward J."/>
            <person name="Norberczak H."/>
            <person name="Lord A."/>
            <person name="Arrowsmith C."/>
            <person name="Jagels K."/>
            <person name="Moule S."/>
            <person name="Mungall K."/>
            <person name="Saunders M."/>
            <person name="Whitehead S."/>
            <person name="Chabalgoity J.A."/>
            <person name="Maskell D."/>
            <person name="Humphreys T."/>
            <person name="Roberts M."/>
            <person name="Barrow P.A."/>
            <person name="Dougan G."/>
            <person name="Parkhill J."/>
        </authorList>
    </citation>
    <scope>NUCLEOTIDE SEQUENCE [LARGE SCALE GENOMIC DNA]</scope>
    <source>
        <strain>P125109</strain>
    </source>
</reference>
<dbReference type="EMBL" id="AM933172">
    <property type="protein sequence ID" value="CAR33706.1"/>
    <property type="molecule type" value="Genomic_DNA"/>
</dbReference>
<dbReference type="RefSeq" id="WP_001197783.1">
    <property type="nucleotide sequence ID" value="NC_011294.1"/>
</dbReference>
<dbReference type="SMR" id="B5R0C0"/>
<dbReference type="KEGG" id="set:SEN2123"/>
<dbReference type="HOGENOM" id="CLU_002755_1_1_6"/>
<dbReference type="Proteomes" id="UP000000613">
    <property type="component" value="Chromosome"/>
</dbReference>
<dbReference type="GO" id="GO:0005886">
    <property type="term" value="C:plasma membrane"/>
    <property type="evidence" value="ECO:0007669"/>
    <property type="project" value="UniProtKB-SubCell"/>
</dbReference>
<dbReference type="GO" id="GO:0042910">
    <property type="term" value="F:xenobiotic transmembrane transporter activity"/>
    <property type="evidence" value="ECO:0007669"/>
    <property type="project" value="TreeGrafter"/>
</dbReference>
<dbReference type="FunFam" id="1.20.1640.10:FF:000001">
    <property type="entry name" value="Efflux pump membrane transporter"/>
    <property type="match status" value="1"/>
</dbReference>
<dbReference type="FunFam" id="3.30.70.1430:FF:000001">
    <property type="entry name" value="Efflux pump membrane transporter"/>
    <property type="match status" value="1"/>
</dbReference>
<dbReference type="FunFam" id="3.30.2090.10:FF:000003">
    <property type="entry name" value="Multidrug resistance protein MdtB"/>
    <property type="match status" value="1"/>
</dbReference>
<dbReference type="Gene3D" id="3.30.70.1430">
    <property type="entry name" value="Multidrug efflux transporter AcrB pore domain"/>
    <property type="match status" value="2"/>
</dbReference>
<dbReference type="Gene3D" id="3.30.70.1440">
    <property type="entry name" value="Multidrug efflux transporter AcrB pore domain"/>
    <property type="match status" value="1"/>
</dbReference>
<dbReference type="Gene3D" id="3.30.70.1320">
    <property type="entry name" value="Multidrug efflux transporter AcrB pore domain like"/>
    <property type="match status" value="1"/>
</dbReference>
<dbReference type="Gene3D" id="3.30.2090.10">
    <property type="entry name" value="Multidrug efflux transporter AcrB TolC docking domain, DN and DC subdomains"/>
    <property type="match status" value="2"/>
</dbReference>
<dbReference type="Gene3D" id="1.20.1640.10">
    <property type="entry name" value="Multidrug efflux transporter AcrB transmembrane domain"/>
    <property type="match status" value="2"/>
</dbReference>
<dbReference type="HAMAP" id="MF_01423">
    <property type="entry name" value="MdtB"/>
    <property type="match status" value="1"/>
</dbReference>
<dbReference type="InterPro" id="IPR027463">
    <property type="entry name" value="AcrB_DN_DC_subdom"/>
</dbReference>
<dbReference type="InterPro" id="IPR001036">
    <property type="entry name" value="Acrflvin-R"/>
</dbReference>
<dbReference type="InterPro" id="IPR022831">
    <property type="entry name" value="Multidrug-R_MdtB"/>
</dbReference>
<dbReference type="NCBIfam" id="NF007798">
    <property type="entry name" value="PRK10503.1"/>
    <property type="match status" value="1"/>
</dbReference>
<dbReference type="NCBIfam" id="NF033617">
    <property type="entry name" value="RND_permease_2"/>
    <property type="match status" value="1"/>
</dbReference>
<dbReference type="PANTHER" id="PTHR32063">
    <property type="match status" value="1"/>
</dbReference>
<dbReference type="PANTHER" id="PTHR32063:SF21">
    <property type="entry name" value="MULTIDRUG RESISTANCE PROTEIN MDTB"/>
    <property type="match status" value="1"/>
</dbReference>
<dbReference type="Pfam" id="PF00873">
    <property type="entry name" value="ACR_tran"/>
    <property type="match status" value="1"/>
</dbReference>
<dbReference type="PRINTS" id="PR00702">
    <property type="entry name" value="ACRIFLAVINRP"/>
</dbReference>
<dbReference type="SUPFAM" id="SSF82693">
    <property type="entry name" value="Multidrug efflux transporter AcrB pore domain, PN1, PN2, PC1 and PC2 subdomains"/>
    <property type="match status" value="3"/>
</dbReference>
<dbReference type="SUPFAM" id="SSF82714">
    <property type="entry name" value="Multidrug efflux transporter AcrB TolC docking domain, DN and DC subdomains"/>
    <property type="match status" value="2"/>
</dbReference>
<dbReference type="SUPFAM" id="SSF82866">
    <property type="entry name" value="Multidrug efflux transporter AcrB transmembrane domain"/>
    <property type="match status" value="2"/>
</dbReference>
<comment type="subunit">
    <text evidence="1">Part of a tripartite efflux system composed of MdtA, MdtB and MdtC. MdtB forms a heteromultimer with MdtC.</text>
</comment>
<comment type="subcellular location">
    <subcellularLocation>
        <location evidence="1">Cell inner membrane</location>
        <topology evidence="1">Multi-pass membrane protein</topology>
    </subcellularLocation>
</comment>
<comment type="similarity">
    <text evidence="1">Belongs to the resistance-nodulation-cell division (RND) (TC 2.A.6) family. MdtB subfamily.</text>
</comment>
<keyword id="KW-0997">Cell inner membrane</keyword>
<keyword id="KW-1003">Cell membrane</keyword>
<keyword id="KW-0472">Membrane</keyword>
<keyword id="KW-0812">Transmembrane</keyword>
<keyword id="KW-1133">Transmembrane helix</keyword>
<keyword id="KW-0813">Transport</keyword>
<sequence>MQVLPPGSTGGPSRLFILRPVATTLLMAAILLAGIIGYRFLPVAALPEVDYPTIQVVTLYPGASPDVMTSAVTAPLERQFGQMSGLKQMSSQSSGGASVVTLQFQLTLPLDVAEQEVQAAINAATNLLPSDLPNPPIYSKVNPADPPIMTLAVTSNAMPMTQVEDMVETRVAQKISQVSGVGLVTLAGGQRPAVRVKLNAQAIAALGLTSETVRTAITGANVNSAKGSLDGPERAVTLSANDQMQSADEYRKLIIAYQNGAPVRLGDVATVEQGAENSWLGAWANQAPAIVMNVQRQPGANIIATADSIRQMLPQLTESLPKSVKVTVLSDRTTNIRASVRDTQFELMLAIALVVMIIYLFLRNIPATIIPGVAVPLSLIGTFAVMVFLDFSINNLTLMALTIATGFVVDDAIVVIENISRYIEKGEKPLAAALKGAGEIGFTIISLTFSLIAVLIPLLFMGDIVGRLFREFAVTLAVAILISAVVSLTLTPMMCARMLSQQSLRKQNRFSRACERMFDRVIASYGRGLAKVLNHPWLTLSVAFATLLLSVMLWIVIPKGFFPVQDNGIIQGTLQAPQSSSYASMAQRQRQVAERILQDPAVQSLTTFVGVDGANPTLNSARLQINLKPLDARDDRVQQVISRLQTAVATIPGVALYLQPTQDLTIDTQVSRTQYQFTLQATTLDALSHWVPKLQNALQSLPQLSEVSSDWQDRGLAAWVNVDRDSASRLGISMADVDNALYNAFGQRLISTIYTQANQYRVVLEHNTASTPGLAALETIRLTSRDGGTVPLSAIARIEQRFAPLSINHLDQFPVTTFSFNVPEGYSLGDAVQAILDTEKTLALPADITTQFQGSTLAFQAALGSTVWLIVAAVVAMYIVLGVLYESFIHPITILSTLPTAGVGALLALIIAGSELDIIAIIGIILLIGIVKKNAIMMIDFALAAEREQGMSPRDAIFQACLLRFRPILMTTLAALLGALPLMLSTGVGAELRRPLGIAMVGGLLVSQVLTLFTTPVIYLLFDRLSLYVKSRFPRHKEEA</sequence>
<gene>
    <name evidence="1" type="primary">mdtB</name>
    <name type="ordered locus">SEN2123</name>
</gene>
<protein>
    <recommendedName>
        <fullName evidence="1">Multidrug resistance protein MdtB</fullName>
    </recommendedName>
    <alternativeName>
        <fullName evidence="1">Multidrug transporter MdtB</fullName>
    </alternativeName>
</protein>
<feature type="chain" id="PRO_1000145659" description="Multidrug resistance protein MdtB">
    <location>
        <begin position="1"/>
        <end position="1040"/>
    </location>
</feature>
<feature type="transmembrane region" description="Helical" evidence="1">
    <location>
        <begin position="25"/>
        <end position="45"/>
    </location>
</feature>
<feature type="transmembrane region" description="Helical" evidence="1">
    <location>
        <begin position="347"/>
        <end position="367"/>
    </location>
</feature>
<feature type="transmembrane region" description="Helical" evidence="1">
    <location>
        <begin position="369"/>
        <end position="389"/>
    </location>
</feature>
<feature type="transmembrane region" description="Helical" evidence="1">
    <location>
        <begin position="396"/>
        <end position="416"/>
    </location>
</feature>
<feature type="transmembrane region" description="Helical" evidence="1">
    <location>
        <begin position="440"/>
        <end position="460"/>
    </location>
</feature>
<feature type="transmembrane region" description="Helical" evidence="1">
    <location>
        <begin position="472"/>
        <end position="492"/>
    </location>
</feature>
<feature type="transmembrane region" description="Helical" evidence="1">
    <location>
        <begin position="537"/>
        <end position="557"/>
    </location>
</feature>
<feature type="transmembrane region" description="Helical" evidence="1">
    <location>
        <begin position="863"/>
        <end position="883"/>
    </location>
</feature>
<feature type="transmembrane region" description="Helical" evidence="1">
    <location>
        <begin position="888"/>
        <end position="908"/>
    </location>
</feature>
<feature type="transmembrane region" description="Helical" evidence="1">
    <location>
        <begin position="910"/>
        <end position="930"/>
    </location>
</feature>
<feature type="transmembrane region" description="Helical" evidence="1">
    <location>
        <begin position="968"/>
        <end position="988"/>
    </location>
</feature>
<feature type="transmembrane region" description="Helical" evidence="1">
    <location>
        <begin position="998"/>
        <end position="1018"/>
    </location>
</feature>
<proteinExistence type="inferred from homology"/>
<accession>B5R0C0</accession>
<name>MDTB_SALEP</name>
<organism>
    <name type="scientific">Salmonella enteritidis PT4 (strain P125109)</name>
    <dbReference type="NCBI Taxonomy" id="550537"/>
    <lineage>
        <taxon>Bacteria</taxon>
        <taxon>Pseudomonadati</taxon>
        <taxon>Pseudomonadota</taxon>
        <taxon>Gammaproteobacteria</taxon>
        <taxon>Enterobacterales</taxon>
        <taxon>Enterobacteriaceae</taxon>
        <taxon>Salmonella</taxon>
    </lineage>
</organism>
<evidence type="ECO:0000255" key="1">
    <source>
        <dbReference type="HAMAP-Rule" id="MF_01423"/>
    </source>
</evidence>